<name>PM34_DICDI</name>
<feature type="chain" id="PRO_0000385537" description="Mitochondrial substrate carrier family protein Q">
    <location>
        <begin position="1"/>
        <end position="329"/>
    </location>
</feature>
<feature type="transmembrane region" description="Helical; Name=1" evidence="2">
    <location>
        <begin position="21"/>
        <end position="41"/>
    </location>
</feature>
<feature type="transmembrane region" description="Helical; Name=2" evidence="2">
    <location>
        <begin position="95"/>
        <end position="115"/>
    </location>
</feature>
<feature type="transmembrane region" description="Helical; Name=3" evidence="2">
    <location>
        <begin position="131"/>
        <end position="151"/>
    </location>
</feature>
<feature type="transmembrane region" description="Helical; Name=4" evidence="2">
    <location>
        <begin position="175"/>
        <end position="195"/>
    </location>
</feature>
<feature type="transmembrane region" description="Helical; Name=5" evidence="2">
    <location>
        <begin position="221"/>
        <end position="241"/>
    </location>
</feature>
<feature type="transmembrane region" description="Helical; Name=6" evidence="2">
    <location>
        <begin position="298"/>
        <end position="318"/>
    </location>
</feature>
<feature type="repeat" description="Solcar 1">
    <location>
        <begin position="18"/>
        <end position="115"/>
    </location>
</feature>
<feature type="repeat" description="Solcar 2">
    <location>
        <begin position="125"/>
        <end position="206"/>
    </location>
</feature>
<feature type="repeat" description="Solcar 3">
    <location>
        <begin position="216"/>
        <end position="310"/>
    </location>
</feature>
<protein>
    <recommendedName>
        <fullName>Mitochondrial substrate carrier family protein Q</fullName>
    </recommendedName>
    <alternativeName>
        <fullName>Solute carrier family 25 member 17 homolog</fullName>
    </alternativeName>
</protein>
<accession>Q76P23</accession>
<accession>Q55A24</accession>
<gene>
    <name type="primary">mcfQ</name>
    <name type="synonym">slc25a17</name>
    <name type="ORF">DDB_G0272346</name>
</gene>
<proteinExistence type="evidence at transcript level"/>
<reference key="1">
    <citation type="journal article" date="2002" name="Nature">
        <title>Sequence and analysis of chromosome 2 of Dictyostelium discoideum.</title>
        <authorList>
            <person name="Gloeckner G."/>
            <person name="Eichinger L."/>
            <person name="Szafranski K."/>
            <person name="Pachebat J.A."/>
            <person name="Bankier A.T."/>
            <person name="Dear P.H."/>
            <person name="Lehmann R."/>
            <person name="Baumgart C."/>
            <person name="Parra G."/>
            <person name="Abril J.F."/>
            <person name="Guigo R."/>
            <person name="Kumpf K."/>
            <person name="Tunggal B."/>
            <person name="Cox E.C."/>
            <person name="Quail M.A."/>
            <person name="Platzer M."/>
            <person name="Rosenthal A."/>
            <person name="Noegel A.A."/>
        </authorList>
    </citation>
    <scope>NUCLEOTIDE SEQUENCE [LARGE SCALE GENOMIC DNA]</scope>
    <source>
        <strain>AX4</strain>
    </source>
</reference>
<reference key="2">
    <citation type="journal article" date="2005" name="Nature">
        <title>The genome of the social amoeba Dictyostelium discoideum.</title>
        <authorList>
            <person name="Eichinger L."/>
            <person name="Pachebat J.A."/>
            <person name="Gloeckner G."/>
            <person name="Rajandream M.A."/>
            <person name="Sucgang R."/>
            <person name="Berriman M."/>
            <person name="Song J."/>
            <person name="Olsen R."/>
            <person name="Szafranski K."/>
            <person name="Xu Q."/>
            <person name="Tunggal B."/>
            <person name="Kummerfeld S."/>
            <person name="Madera M."/>
            <person name="Konfortov B.A."/>
            <person name="Rivero F."/>
            <person name="Bankier A.T."/>
            <person name="Lehmann R."/>
            <person name="Hamlin N."/>
            <person name="Davies R."/>
            <person name="Gaudet P."/>
            <person name="Fey P."/>
            <person name="Pilcher K."/>
            <person name="Chen G."/>
            <person name="Saunders D."/>
            <person name="Sodergren E.J."/>
            <person name="Davis P."/>
            <person name="Kerhornou A."/>
            <person name="Nie X."/>
            <person name="Hall N."/>
            <person name="Anjard C."/>
            <person name="Hemphill L."/>
            <person name="Bason N."/>
            <person name="Farbrother P."/>
            <person name="Desany B."/>
            <person name="Just E."/>
            <person name="Morio T."/>
            <person name="Rost R."/>
            <person name="Churcher C.M."/>
            <person name="Cooper J."/>
            <person name="Haydock S."/>
            <person name="van Driessche N."/>
            <person name="Cronin A."/>
            <person name="Goodhead I."/>
            <person name="Muzny D.M."/>
            <person name="Mourier T."/>
            <person name="Pain A."/>
            <person name="Lu M."/>
            <person name="Harper D."/>
            <person name="Lindsay R."/>
            <person name="Hauser H."/>
            <person name="James K.D."/>
            <person name="Quiles M."/>
            <person name="Madan Babu M."/>
            <person name="Saito T."/>
            <person name="Buchrieser C."/>
            <person name="Wardroper A."/>
            <person name="Felder M."/>
            <person name="Thangavelu M."/>
            <person name="Johnson D."/>
            <person name="Knights A."/>
            <person name="Loulseged H."/>
            <person name="Mungall K.L."/>
            <person name="Oliver K."/>
            <person name="Price C."/>
            <person name="Quail M.A."/>
            <person name="Urushihara H."/>
            <person name="Hernandez J."/>
            <person name="Rabbinowitsch E."/>
            <person name="Steffen D."/>
            <person name="Sanders M."/>
            <person name="Ma J."/>
            <person name="Kohara Y."/>
            <person name="Sharp S."/>
            <person name="Simmonds M.N."/>
            <person name="Spiegler S."/>
            <person name="Tivey A."/>
            <person name="Sugano S."/>
            <person name="White B."/>
            <person name="Walker D."/>
            <person name="Woodward J.R."/>
            <person name="Winckler T."/>
            <person name="Tanaka Y."/>
            <person name="Shaulsky G."/>
            <person name="Schleicher M."/>
            <person name="Weinstock G.M."/>
            <person name="Rosenthal A."/>
            <person name="Cox E.C."/>
            <person name="Chisholm R.L."/>
            <person name="Gibbs R.A."/>
            <person name="Loomis W.F."/>
            <person name="Platzer M."/>
            <person name="Kay R.R."/>
            <person name="Williams J.G."/>
            <person name="Dear P.H."/>
            <person name="Noegel A.A."/>
            <person name="Barrell B.G."/>
            <person name="Kuspa A."/>
        </authorList>
    </citation>
    <scope>NUCLEOTIDE SEQUENCE [LARGE SCALE GENOMIC DNA]</scope>
    <source>
        <strain>AX4</strain>
    </source>
</reference>
<reference key="3">
    <citation type="journal article" date="2007" name="Biochimie">
        <title>Mitochondrial carrier family: repertoire and peculiarities of the cellular slime mould Dictyostelium discoideum.</title>
        <authorList>
            <person name="Satre M."/>
            <person name="Mattei S."/>
            <person name="Aubry L."/>
            <person name="Gaudet P."/>
            <person name="Pelosi L."/>
            <person name="Brandolin G."/>
            <person name="Klein G."/>
        </authorList>
    </citation>
    <scope>REVIEW</scope>
</reference>
<reference key="4">
    <citation type="journal article" date="2008" name="BMC Genomics">
        <title>Genome-wide transcriptional changes induced by phagocytosis or growth on bacteria in Dictyostelium.</title>
        <authorList>
            <person name="Sillo A."/>
            <person name="Bloomfield G."/>
            <person name="Balest A."/>
            <person name="Balbo A."/>
            <person name="Pergolizzi B."/>
            <person name="Peracino B."/>
            <person name="Skelton J."/>
            <person name="Ivens A."/>
            <person name="Bozzaro S."/>
        </authorList>
    </citation>
    <scope>INDUCTION [LARGE SCALE ANALYSIS]</scope>
</reference>
<keyword id="KW-0472">Membrane</keyword>
<keyword id="KW-0576">Peroxisome</keyword>
<keyword id="KW-1185">Reference proteome</keyword>
<keyword id="KW-0677">Repeat</keyword>
<keyword id="KW-0812">Transmembrane</keyword>
<keyword id="KW-1133">Transmembrane helix</keyword>
<keyword id="KW-0813">Transport</keyword>
<dbReference type="EMBL" id="AAFI02000008">
    <property type="protein sequence ID" value="EAL71325.1"/>
    <property type="molecule type" value="Genomic_DNA"/>
</dbReference>
<dbReference type="RefSeq" id="XP_645160.1">
    <property type="nucleotide sequence ID" value="XM_640068.1"/>
</dbReference>
<dbReference type="SMR" id="Q76P23"/>
<dbReference type="FunCoup" id="Q76P23">
    <property type="interactions" value="491"/>
</dbReference>
<dbReference type="STRING" id="44689.Q76P23"/>
<dbReference type="PaxDb" id="44689-DDB0234095"/>
<dbReference type="EnsemblProtists" id="EAL71325">
    <property type="protein sequence ID" value="EAL71325"/>
    <property type="gene ID" value="DDB_G0272346"/>
</dbReference>
<dbReference type="GeneID" id="8618331"/>
<dbReference type="KEGG" id="ddi:DDB_G0272346"/>
<dbReference type="dictyBase" id="DDB_G0272346">
    <property type="gene designation" value="mcfQ"/>
</dbReference>
<dbReference type="VEuPathDB" id="AmoebaDB:DDB_G0272346"/>
<dbReference type="eggNOG" id="KOG0769">
    <property type="taxonomic scope" value="Eukaryota"/>
</dbReference>
<dbReference type="HOGENOM" id="CLU_015166_6_3_1"/>
<dbReference type="InParanoid" id="Q76P23"/>
<dbReference type="OMA" id="QFMMYEL"/>
<dbReference type="PhylomeDB" id="Q76P23"/>
<dbReference type="Reactome" id="R-DDI-389599">
    <property type="pathway name" value="Alpha-oxidation of phytanate"/>
</dbReference>
<dbReference type="Reactome" id="R-DDI-9603798">
    <property type="pathway name" value="Class I peroxisomal membrane protein import"/>
</dbReference>
<dbReference type="PRO" id="PR:Q76P23"/>
<dbReference type="Proteomes" id="UP000002195">
    <property type="component" value="Chromosome 2"/>
</dbReference>
<dbReference type="GO" id="GO:0005778">
    <property type="term" value="C:peroxisomal membrane"/>
    <property type="evidence" value="ECO:0000318"/>
    <property type="project" value="GO_Central"/>
</dbReference>
<dbReference type="GO" id="GO:0005777">
    <property type="term" value="C:peroxisome"/>
    <property type="evidence" value="ECO:0000250"/>
    <property type="project" value="dictyBase"/>
</dbReference>
<dbReference type="GO" id="GO:0015217">
    <property type="term" value="F:ADP transmembrane transporter activity"/>
    <property type="evidence" value="ECO:0000318"/>
    <property type="project" value="GO_Central"/>
</dbReference>
<dbReference type="GO" id="GO:0080122">
    <property type="term" value="F:AMP transmembrane transporter activity"/>
    <property type="evidence" value="ECO:0000318"/>
    <property type="project" value="GO_Central"/>
</dbReference>
<dbReference type="GO" id="GO:0005347">
    <property type="term" value="F:ATP transmembrane transporter activity"/>
    <property type="evidence" value="ECO:0000318"/>
    <property type="project" value="GO_Central"/>
</dbReference>
<dbReference type="GO" id="GO:0015228">
    <property type="term" value="F:coenzyme A transmembrane transporter activity"/>
    <property type="evidence" value="ECO:0000318"/>
    <property type="project" value="GO_Central"/>
</dbReference>
<dbReference type="GO" id="GO:0015230">
    <property type="term" value="F:FAD transmembrane transporter activity"/>
    <property type="evidence" value="ECO:0000318"/>
    <property type="project" value="GO_Central"/>
</dbReference>
<dbReference type="GO" id="GO:0044610">
    <property type="term" value="F:FMN transmembrane transporter activity"/>
    <property type="evidence" value="ECO:0000318"/>
    <property type="project" value="GO_Central"/>
</dbReference>
<dbReference type="GO" id="GO:0051724">
    <property type="term" value="F:NAD transmembrane transporter activity"/>
    <property type="evidence" value="ECO:0000318"/>
    <property type="project" value="GO_Central"/>
</dbReference>
<dbReference type="FunFam" id="1.50.40.10:FF:000204">
    <property type="entry name" value="Peroxisomal nicotinamide adenine dinucleotide carrier"/>
    <property type="match status" value="1"/>
</dbReference>
<dbReference type="Gene3D" id="1.50.40.10">
    <property type="entry name" value="Mitochondrial carrier domain"/>
    <property type="match status" value="1"/>
</dbReference>
<dbReference type="InterPro" id="IPR052217">
    <property type="entry name" value="Mito/Peroxisomal_Carrier"/>
</dbReference>
<dbReference type="InterPro" id="IPR018108">
    <property type="entry name" value="Mitochondrial_sb/sol_carrier"/>
</dbReference>
<dbReference type="InterPro" id="IPR023395">
    <property type="entry name" value="Mt_carrier_dom_sf"/>
</dbReference>
<dbReference type="PANTHER" id="PTHR45939:SF5">
    <property type="entry name" value="PEROXISOMAL MEMBRANE PROTEIN PMP34"/>
    <property type="match status" value="1"/>
</dbReference>
<dbReference type="PANTHER" id="PTHR45939">
    <property type="entry name" value="PEROXISOMAL MEMBRANE PROTEIN PMP34-RELATED"/>
    <property type="match status" value="1"/>
</dbReference>
<dbReference type="Pfam" id="PF00153">
    <property type="entry name" value="Mito_carr"/>
    <property type="match status" value="3"/>
</dbReference>
<dbReference type="SUPFAM" id="SSF103506">
    <property type="entry name" value="Mitochondrial carrier"/>
    <property type="match status" value="1"/>
</dbReference>
<dbReference type="PROSITE" id="PS50920">
    <property type="entry name" value="SOLCAR"/>
    <property type="match status" value="3"/>
</dbReference>
<organism>
    <name type="scientific">Dictyostelium discoideum</name>
    <name type="common">Social amoeba</name>
    <dbReference type="NCBI Taxonomy" id="44689"/>
    <lineage>
        <taxon>Eukaryota</taxon>
        <taxon>Amoebozoa</taxon>
        <taxon>Evosea</taxon>
        <taxon>Eumycetozoa</taxon>
        <taxon>Dictyostelia</taxon>
        <taxon>Dictyosteliales</taxon>
        <taxon>Dictyosteliaceae</taxon>
        <taxon>Dictyostelium</taxon>
    </lineage>
</organism>
<evidence type="ECO:0000250" key="1"/>
<evidence type="ECO:0000255" key="2"/>
<evidence type="ECO:0000269" key="3">
    <source>
    </source>
</evidence>
<evidence type="ECO:0000305" key="4"/>
<comment type="function">
    <text evidence="1">May have transport activity.</text>
</comment>
<comment type="subcellular location">
    <subcellularLocation>
        <location evidence="1">Peroxisome membrane</location>
        <topology evidence="1">Multi-pass membrane protein</topology>
    </subcellularLocation>
</comment>
<comment type="induction">
    <text evidence="3">Down-regulated by phagocytic stimuli.</text>
</comment>
<comment type="similarity">
    <text evidence="4">Belongs to the mitochondrial carrier (TC 2.A.29) family.</text>
</comment>
<sequence length="329" mass="36316">MSEKIHITQNSGNVDHTVEALGHAISGGVAGMAAIALTYPFSTVSTRLQVQQKKQQQGQQSEITTVPYKNSIDAFKRIIKEENWRTLYSGLKSALIGIGASSFVYYYWYTLLKSISLKLKNKQELGTIENLAIAALAGCANVLTTLPIWVVNTRLQINSDKGIVGQFKYIIKNEGFGGLYKGLIPALILVSNPSVQFVSYEKLRALWRRQSGRTKLGGLEVFILGAIAKLIAGIVTYPYLLVKSRLQSQSGNASNPESQQQQYKGTLDAIGKIFKSDGFLGFFKGMPSKMVQTVIGAAFMFLVKDKVVIHAVAILFYLKRLLNKNNKRV</sequence>